<comment type="function">
    <text evidence="1">This protein binds to the 23S rRNA, and is important in its secondary structure. It is located near the subunit interface in the base of the L7/L12 stalk, and near the tRNA binding site of the peptidyltransferase center.</text>
</comment>
<comment type="subunit">
    <text evidence="1">Part of the 50S ribosomal subunit.</text>
</comment>
<comment type="similarity">
    <text evidence="1">Belongs to the universal ribosomal protein uL6 family.</text>
</comment>
<accession>Q089N9</accession>
<gene>
    <name evidence="1" type="primary">rplF</name>
    <name type="ordered locus">Sfri_0163</name>
</gene>
<dbReference type="EMBL" id="CP000447">
    <property type="protein sequence ID" value="ABI70026.1"/>
    <property type="molecule type" value="Genomic_DNA"/>
</dbReference>
<dbReference type="RefSeq" id="WP_011635654.1">
    <property type="nucleotide sequence ID" value="NC_008345.1"/>
</dbReference>
<dbReference type="SMR" id="Q089N9"/>
<dbReference type="STRING" id="318167.Sfri_0163"/>
<dbReference type="KEGG" id="sfr:Sfri_0163"/>
<dbReference type="eggNOG" id="COG0097">
    <property type="taxonomic scope" value="Bacteria"/>
</dbReference>
<dbReference type="HOGENOM" id="CLU_065464_1_2_6"/>
<dbReference type="OrthoDB" id="9805007at2"/>
<dbReference type="Proteomes" id="UP000000684">
    <property type="component" value="Chromosome"/>
</dbReference>
<dbReference type="GO" id="GO:0022625">
    <property type="term" value="C:cytosolic large ribosomal subunit"/>
    <property type="evidence" value="ECO:0007669"/>
    <property type="project" value="TreeGrafter"/>
</dbReference>
<dbReference type="GO" id="GO:0019843">
    <property type="term" value="F:rRNA binding"/>
    <property type="evidence" value="ECO:0007669"/>
    <property type="project" value="UniProtKB-UniRule"/>
</dbReference>
<dbReference type="GO" id="GO:0003735">
    <property type="term" value="F:structural constituent of ribosome"/>
    <property type="evidence" value="ECO:0007669"/>
    <property type="project" value="InterPro"/>
</dbReference>
<dbReference type="GO" id="GO:0002181">
    <property type="term" value="P:cytoplasmic translation"/>
    <property type="evidence" value="ECO:0007669"/>
    <property type="project" value="TreeGrafter"/>
</dbReference>
<dbReference type="FunFam" id="3.90.930.12:FF:000001">
    <property type="entry name" value="50S ribosomal protein L6"/>
    <property type="match status" value="1"/>
</dbReference>
<dbReference type="FunFam" id="3.90.930.12:FF:000002">
    <property type="entry name" value="50S ribosomal protein L6"/>
    <property type="match status" value="1"/>
</dbReference>
<dbReference type="Gene3D" id="3.90.930.12">
    <property type="entry name" value="Ribosomal protein L6, alpha-beta domain"/>
    <property type="match status" value="2"/>
</dbReference>
<dbReference type="HAMAP" id="MF_01365_B">
    <property type="entry name" value="Ribosomal_uL6_B"/>
    <property type="match status" value="1"/>
</dbReference>
<dbReference type="InterPro" id="IPR000702">
    <property type="entry name" value="Ribosomal_uL6-like"/>
</dbReference>
<dbReference type="InterPro" id="IPR036789">
    <property type="entry name" value="Ribosomal_uL6-like_a/b-dom_sf"/>
</dbReference>
<dbReference type="InterPro" id="IPR020040">
    <property type="entry name" value="Ribosomal_uL6_a/b-dom"/>
</dbReference>
<dbReference type="InterPro" id="IPR019906">
    <property type="entry name" value="Ribosomal_uL6_bac-type"/>
</dbReference>
<dbReference type="InterPro" id="IPR002358">
    <property type="entry name" value="Ribosomal_uL6_CS"/>
</dbReference>
<dbReference type="NCBIfam" id="TIGR03654">
    <property type="entry name" value="L6_bact"/>
    <property type="match status" value="1"/>
</dbReference>
<dbReference type="PANTHER" id="PTHR11655">
    <property type="entry name" value="60S/50S RIBOSOMAL PROTEIN L6/L9"/>
    <property type="match status" value="1"/>
</dbReference>
<dbReference type="PANTHER" id="PTHR11655:SF14">
    <property type="entry name" value="LARGE RIBOSOMAL SUBUNIT PROTEIN UL6M"/>
    <property type="match status" value="1"/>
</dbReference>
<dbReference type="Pfam" id="PF00347">
    <property type="entry name" value="Ribosomal_L6"/>
    <property type="match status" value="2"/>
</dbReference>
<dbReference type="PIRSF" id="PIRSF002162">
    <property type="entry name" value="Ribosomal_L6"/>
    <property type="match status" value="1"/>
</dbReference>
<dbReference type="PRINTS" id="PR00059">
    <property type="entry name" value="RIBOSOMALL6"/>
</dbReference>
<dbReference type="SUPFAM" id="SSF56053">
    <property type="entry name" value="Ribosomal protein L6"/>
    <property type="match status" value="2"/>
</dbReference>
<dbReference type="PROSITE" id="PS00525">
    <property type="entry name" value="RIBOSOMAL_L6_1"/>
    <property type="match status" value="1"/>
</dbReference>
<name>RL6_SHEFN</name>
<evidence type="ECO:0000255" key="1">
    <source>
        <dbReference type="HAMAP-Rule" id="MF_01365"/>
    </source>
</evidence>
<evidence type="ECO:0000305" key="2"/>
<reference key="1">
    <citation type="submission" date="2006-08" db="EMBL/GenBank/DDBJ databases">
        <title>Complete sequence of Shewanella frigidimarina NCIMB 400.</title>
        <authorList>
            <consortium name="US DOE Joint Genome Institute"/>
            <person name="Copeland A."/>
            <person name="Lucas S."/>
            <person name="Lapidus A."/>
            <person name="Barry K."/>
            <person name="Detter J.C."/>
            <person name="Glavina del Rio T."/>
            <person name="Hammon N."/>
            <person name="Israni S."/>
            <person name="Dalin E."/>
            <person name="Tice H."/>
            <person name="Pitluck S."/>
            <person name="Fredrickson J.K."/>
            <person name="Kolker E."/>
            <person name="McCuel L.A."/>
            <person name="DiChristina T."/>
            <person name="Nealson K.H."/>
            <person name="Newman D."/>
            <person name="Tiedje J.M."/>
            <person name="Zhou J."/>
            <person name="Romine M.F."/>
            <person name="Culley D.E."/>
            <person name="Serres M."/>
            <person name="Chertkov O."/>
            <person name="Brettin T."/>
            <person name="Bruce D."/>
            <person name="Han C."/>
            <person name="Tapia R."/>
            <person name="Gilna P."/>
            <person name="Schmutz J."/>
            <person name="Larimer F."/>
            <person name="Land M."/>
            <person name="Hauser L."/>
            <person name="Kyrpides N."/>
            <person name="Mikhailova N."/>
            <person name="Richardson P."/>
        </authorList>
    </citation>
    <scope>NUCLEOTIDE SEQUENCE [LARGE SCALE GENOMIC DNA]</scope>
    <source>
        <strain>NCIMB 400</strain>
    </source>
</reference>
<proteinExistence type="inferred from homology"/>
<sequence>MSRVAKAPVTVPAGVEVTLNEQTLTVKGSKGSLTRVINNAVNVVIEDAQVKFLPVDGVSNAWAQAGTARALVNNMVVGVSQGFVKKLKLVGVGYRAKIAGSDLDLTLGFSHPLVHKLPAGVTAECPSQTEIVLSGVDKQVVGQVAAEIRGYRPPEPYKGKGVRYDDEIVRRKEAKKK</sequence>
<organism>
    <name type="scientific">Shewanella frigidimarina (strain NCIMB 400)</name>
    <dbReference type="NCBI Taxonomy" id="318167"/>
    <lineage>
        <taxon>Bacteria</taxon>
        <taxon>Pseudomonadati</taxon>
        <taxon>Pseudomonadota</taxon>
        <taxon>Gammaproteobacteria</taxon>
        <taxon>Alteromonadales</taxon>
        <taxon>Shewanellaceae</taxon>
        <taxon>Shewanella</taxon>
    </lineage>
</organism>
<protein>
    <recommendedName>
        <fullName evidence="1">Large ribosomal subunit protein uL6</fullName>
    </recommendedName>
    <alternativeName>
        <fullName evidence="2">50S ribosomal protein L6</fullName>
    </alternativeName>
</protein>
<feature type="chain" id="PRO_0000265294" description="Large ribosomal subunit protein uL6">
    <location>
        <begin position="1"/>
        <end position="177"/>
    </location>
</feature>
<keyword id="KW-1185">Reference proteome</keyword>
<keyword id="KW-0687">Ribonucleoprotein</keyword>
<keyword id="KW-0689">Ribosomal protein</keyword>
<keyword id="KW-0694">RNA-binding</keyword>
<keyword id="KW-0699">rRNA-binding</keyword>